<feature type="chain" id="PRO_0000374275" description="tRNA-2-methylthio-N(6)-dimethylallyladenosine synthase">
    <location>
        <begin position="1"/>
        <end position="445"/>
    </location>
</feature>
<feature type="domain" description="MTTase N-terminal" evidence="1">
    <location>
        <begin position="2"/>
        <end position="117"/>
    </location>
</feature>
<feature type="domain" description="Radical SAM core" evidence="2">
    <location>
        <begin position="143"/>
        <end position="374"/>
    </location>
</feature>
<feature type="domain" description="TRAM" evidence="1">
    <location>
        <begin position="377"/>
        <end position="441"/>
    </location>
</feature>
<feature type="binding site" evidence="1">
    <location>
        <position position="11"/>
    </location>
    <ligand>
        <name>[4Fe-4S] cluster</name>
        <dbReference type="ChEBI" id="CHEBI:49883"/>
        <label>1</label>
    </ligand>
</feature>
<feature type="binding site" evidence="1">
    <location>
        <position position="47"/>
    </location>
    <ligand>
        <name>[4Fe-4S] cluster</name>
        <dbReference type="ChEBI" id="CHEBI:49883"/>
        <label>1</label>
    </ligand>
</feature>
<feature type="binding site" evidence="1">
    <location>
        <position position="80"/>
    </location>
    <ligand>
        <name>[4Fe-4S] cluster</name>
        <dbReference type="ChEBI" id="CHEBI:49883"/>
        <label>1</label>
    </ligand>
</feature>
<feature type="binding site" evidence="1">
    <location>
        <position position="157"/>
    </location>
    <ligand>
        <name>[4Fe-4S] cluster</name>
        <dbReference type="ChEBI" id="CHEBI:49883"/>
        <label>2</label>
        <note>4Fe-4S-S-AdoMet</note>
    </ligand>
</feature>
<feature type="binding site" evidence="1">
    <location>
        <position position="161"/>
    </location>
    <ligand>
        <name>[4Fe-4S] cluster</name>
        <dbReference type="ChEBI" id="CHEBI:49883"/>
        <label>2</label>
        <note>4Fe-4S-S-AdoMet</note>
    </ligand>
</feature>
<feature type="binding site" evidence="1">
    <location>
        <position position="164"/>
    </location>
    <ligand>
        <name>[4Fe-4S] cluster</name>
        <dbReference type="ChEBI" id="CHEBI:49883"/>
        <label>2</label>
        <note>4Fe-4S-S-AdoMet</note>
    </ligand>
</feature>
<protein>
    <recommendedName>
        <fullName evidence="1">tRNA-2-methylthio-N(6)-dimethylallyladenosine synthase</fullName>
        <ecNumber evidence="1">2.8.4.3</ecNumber>
    </recommendedName>
    <alternativeName>
        <fullName evidence="1">(Dimethylallyl)adenosine tRNA methylthiotransferase MiaB</fullName>
    </alternativeName>
    <alternativeName>
        <fullName evidence="1">tRNA-i(6)A37 methylthiotransferase</fullName>
    </alternativeName>
</protein>
<dbReference type="EC" id="2.8.4.3" evidence="1"/>
<dbReference type="EMBL" id="CR767821">
    <property type="protein sequence ID" value="CAH57979.1"/>
    <property type="molecule type" value="Genomic_DNA"/>
</dbReference>
<dbReference type="EMBL" id="CR925678">
    <property type="protein sequence ID" value="CAI26759.1"/>
    <property type="status" value="ALT_INIT"/>
    <property type="molecule type" value="Genomic_DNA"/>
</dbReference>
<dbReference type="RefSeq" id="WP_011154946.1">
    <property type="nucleotide sequence ID" value="NC_005295.2"/>
</dbReference>
<dbReference type="SMR" id="Q5HBR5"/>
<dbReference type="GeneID" id="33057548"/>
<dbReference type="KEGG" id="eru:Erum2620"/>
<dbReference type="KEGG" id="erw:ERWE_CDS_02650"/>
<dbReference type="eggNOG" id="COG0621">
    <property type="taxonomic scope" value="Bacteria"/>
</dbReference>
<dbReference type="HOGENOM" id="CLU_018697_2_2_5"/>
<dbReference type="Proteomes" id="UP000001021">
    <property type="component" value="Chromosome"/>
</dbReference>
<dbReference type="GO" id="GO:0005829">
    <property type="term" value="C:cytosol"/>
    <property type="evidence" value="ECO:0007669"/>
    <property type="project" value="TreeGrafter"/>
</dbReference>
<dbReference type="GO" id="GO:0051539">
    <property type="term" value="F:4 iron, 4 sulfur cluster binding"/>
    <property type="evidence" value="ECO:0007669"/>
    <property type="project" value="UniProtKB-UniRule"/>
</dbReference>
<dbReference type="GO" id="GO:0046872">
    <property type="term" value="F:metal ion binding"/>
    <property type="evidence" value="ECO:0007669"/>
    <property type="project" value="UniProtKB-KW"/>
</dbReference>
<dbReference type="GO" id="GO:0035597">
    <property type="term" value="F:N6-isopentenyladenosine methylthiotransferase activity"/>
    <property type="evidence" value="ECO:0007669"/>
    <property type="project" value="TreeGrafter"/>
</dbReference>
<dbReference type="CDD" id="cd01335">
    <property type="entry name" value="Radical_SAM"/>
    <property type="match status" value="1"/>
</dbReference>
<dbReference type="FunFam" id="3.40.50.12160:FF:000003">
    <property type="entry name" value="CDK5 regulatory subunit-associated protein 1"/>
    <property type="match status" value="1"/>
</dbReference>
<dbReference type="FunFam" id="3.80.30.20:FF:000001">
    <property type="entry name" value="tRNA-2-methylthio-N(6)-dimethylallyladenosine synthase 2"/>
    <property type="match status" value="1"/>
</dbReference>
<dbReference type="Gene3D" id="3.40.50.12160">
    <property type="entry name" value="Methylthiotransferase, N-terminal domain"/>
    <property type="match status" value="1"/>
</dbReference>
<dbReference type="Gene3D" id="3.80.30.20">
    <property type="entry name" value="tm_1862 like domain"/>
    <property type="match status" value="1"/>
</dbReference>
<dbReference type="HAMAP" id="MF_01864">
    <property type="entry name" value="tRNA_metthiotr_MiaB"/>
    <property type="match status" value="1"/>
</dbReference>
<dbReference type="InterPro" id="IPR006638">
    <property type="entry name" value="Elp3/MiaA/NifB-like_rSAM"/>
</dbReference>
<dbReference type="InterPro" id="IPR005839">
    <property type="entry name" value="Methylthiotransferase"/>
</dbReference>
<dbReference type="InterPro" id="IPR020612">
    <property type="entry name" value="Methylthiotransferase_CS"/>
</dbReference>
<dbReference type="InterPro" id="IPR013848">
    <property type="entry name" value="Methylthiotransferase_N"/>
</dbReference>
<dbReference type="InterPro" id="IPR038135">
    <property type="entry name" value="Methylthiotransferase_N_sf"/>
</dbReference>
<dbReference type="InterPro" id="IPR006463">
    <property type="entry name" value="MiaB_methiolase"/>
</dbReference>
<dbReference type="InterPro" id="IPR007197">
    <property type="entry name" value="rSAM"/>
</dbReference>
<dbReference type="InterPro" id="IPR023404">
    <property type="entry name" value="rSAM_horseshoe"/>
</dbReference>
<dbReference type="InterPro" id="IPR002792">
    <property type="entry name" value="TRAM_dom"/>
</dbReference>
<dbReference type="NCBIfam" id="TIGR01574">
    <property type="entry name" value="miaB-methiolase"/>
    <property type="match status" value="1"/>
</dbReference>
<dbReference type="NCBIfam" id="TIGR00089">
    <property type="entry name" value="MiaB/RimO family radical SAM methylthiotransferase"/>
    <property type="match status" value="1"/>
</dbReference>
<dbReference type="PANTHER" id="PTHR43020">
    <property type="entry name" value="CDK5 REGULATORY SUBUNIT-ASSOCIATED PROTEIN 1"/>
    <property type="match status" value="1"/>
</dbReference>
<dbReference type="PANTHER" id="PTHR43020:SF2">
    <property type="entry name" value="MITOCHONDRIAL TRNA METHYLTHIOTRANSFERASE CDK5RAP1"/>
    <property type="match status" value="1"/>
</dbReference>
<dbReference type="Pfam" id="PF04055">
    <property type="entry name" value="Radical_SAM"/>
    <property type="match status" value="1"/>
</dbReference>
<dbReference type="Pfam" id="PF01938">
    <property type="entry name" value="TRAM"/>
    <property type="match status" value="1"/>
</dbReference>
<dbReference type="Pfam" id="PF00919">
    <property type="entry name" value="UPF0004"/>
    <property type="match status" value="1"/>
</dbReference>
<dbReference type="SFLD" id="SFLDF00273">
    <property type="entry name" value="(dimethylallyl)adenosine_tRNA"/>
    <property type="match status" value="1"/>
</dbReference>
<dbReference type="SFLD" id="SFLDG01082">
    <property type="entry name" value="B12-binding_domain_containing"/>
    <property type="match status" value="1"/>
</dbReference>
<dbReference type="SFLD" id="SFLDS00029">
    <property type="entry name" value="Radical_SAM"/>
    <property type="match status" value="1"/>
</dbReference>
<dbReference type="SMART" id="SM00729">
    <property type="entry name" value="Elp3"/>
    <property type="match status" value="1"/>
</dbReference>
<dbReference type="SUPFAM" id="SSF102114">
    <property type="entry name" value="Radical SAM enzymes"/>
    <property type="match status" value="1"/>
</dbReference>
<dbReference type="PROSITE" id="PS51449">
    <property type="entry name" value="MTTASE_N"/>
    <property type="match status" value="1"/>
</dbReference>
<dbReference type="PROSITE" id="PS01278">
    <property type="entry name" value="MTTASE_RADICAL"/>
    <property type="match status" value="1"/>
</dbReference>
<dbReference type="PROSITE" id="PS51918">
    <property type="entry name" value="RADICAL_SAM"/>
    <property type="match status" value="1"/>
</dbReference>
<proteinExistence type="inferred from homology"/>
<evidence type="ECO:0000255" key="1">
    <source>
        <dbReference type="HAMAP-Rule" id="MF_01864"/>
    </source>
</evidence>
<evidence type="ECO:0000255" key="2">
    <source>
        <dbReference type="PROSITE-ProRule" id="PRU01266"/>
    </source>
</evidence>
<evidence type="ECO:0000305" key="3"/>
<organism>
    <name type="scientific">Ehrlichia ruminantium (strain Welgevonden)</name>
    <dbReference type="NCBI Taxonomy" id="254945"/>
    <lineage>
        <taxon>Bacteria</taxon>
        <taxon>Pseudomonadati</taxon>
        <taxon>Pseudomonadota</taxon>
        <taxon>Alphaproteobacteria</taxon>
        <taxon>Rickettsiales</taxon>
        <taxon>Anaplasmataceae</taxon>
        <taxon>Ehrlichia</taxon>
    </lineage>
</organism>
<accession>Q5HBR5</accession>
<accession>Q5FE65</accession>
<comment type="function">
    <text evidence="1">Catalyzes the methylthiolation of N6-(dimethylallyl)adenosine (i(6)A), leading to the formation of 2-methylthio-N6-(dimethylallyl)adenosine (ms(2)i(6)A) at position 37 in tRNAs that read codons beginning with uridine.</text>
</comment>
<comment type="catalytic activity">
    <reaction evidence="1">
        <text>N(6)-dimethylallyladenosine(37) in tRNA + (sulfur carrier)-SH + AH2 + 2 S-adenosyl-L-methionine = 2-methylsulfanyl-N(6)-dimethylallyladenosine(37) in tRNA + (sulfur carrier)-H + 5'-deoxyadenosine + L-methionine + A + S-adenosyl-L-homocysteine + 2 H(+)</text>
        <dbReference type="Rhea" id="RHEA:37067"/>
        <dbReference type="Rhea" id="RHEA-COMP:10375"/>
        <dbReference type="Rhea" id="RHEA-COMP:10376"/>
        <dbReference type="Rhea" id="RHEA-COMP:14737"/>
        <dbReference type="Rhea" id="RHEA-COMP:14739"/>
        <dbReference type="ChEBI" id="CHEBI:13193"/>
        <dbReference type="ChEBI" id="CHEBI:15378"/>
        <dbReference type="ChEBI" id="CHEBI:17319"/>
        <dbReference type="ChEBI" id="CHEBI:17499"/>
        <dbReference type="ChEBI" id="CHEBI:29917"/>
        <dbReference type="ChEBI" id="CHEBI:57844"/>
        <dbReference type="ChEBI" id="CHEBI:57856"/>
        <dbReference type="ChEBI" id="CHEBI:59789"/>
        <dbReference type="ChEBI" id="CHEBI:64428"/>
        <dbReference type="ChEBI" id="CHEBI:74415"/>
        <dbReference type="ChEBI" id="CHEBI:74417"/>
        <dbReference type="EC" id="2.8.4.3"/>
    </reaction>
</comment>
<comment type="cofactor">
    <cofactor evidence="1">
        <name>[4Fe-4S] cluster</name>
        <dbReference type="ChEBI" id="CHEBI:49883"/>
    </cofactor>
    <text evidence="1">Binds 2 [4Fe-4S] clusters. One cluster is coordinated with 3 cysteines and an exchangeable S-adenosyl-L-methionine.</text>
</comment>
<comment type="subunit">
    <text evidence="1">Monomer.</text>
</comment>
<comment type="subcellular location">
    <subcellularLocation>
        <location evidence="1">Cytoplasm</location>
    </subcellularLocation>
</comment>
<comment type="similarity">
    <text evidence="1">Belongs to the methylthiotransferase family. MiaB subfamily.</text>
</comment>
<comment type="sequence caution" evidence="3">
    <conflict type="erroneous initiation">
        <sequence resource="EMBL-CDS" id="CAI26759"/>
    </conflict>
</comment>
<name>MIAB_EHRRW</name>
<keyword id="KW-0004">4Fe-4S</keyword>
<keyword id="KW-0963">Cytoplasm</keyword>
<keyword id="KW-0408">Iron</keyword>
<keyword id="KW-0411">Iron-sulfur</keyword>
<keyword id="KW-0479">Metal-binding</keyword>
<keyword id="KW-0949">S-adenosyl-L-methionine</keyword>
<keyword id="KW-0808">Transferase</keyword>
<keyword id="KW-0819">tRNA processing</keyword>
<reference key="1">
    <citation type="journal article" date="2005" name="Proc. Natl. Acad. Sci. U.S.A.">
        <title>The genome of the heartwater agent Ehrlichia ruminantium contains multiple tandem repeats of actively variable copy number.</title>
        <authorList>
            <person name="Collins N.E."/>
            <person name="Liebenberg J."/>
            <person name="de Villiers E.P."/>
            <person name="Brayton K.A."/>
            <person name="Louw E."/>
            <person name="Pretorius A."/>
            <person name="Faber F.E."/>
            <person name="van Heerden H."/>
            <person name="Josemans A."/>
            <person name="van Kleef M."/>
            <person name="Steyn H.C."/>
            <person name="van Strijp M.F."/>
            <person name="Zweygarth E."/>
            <person name="Jongejan F."/>
            <person name="Maillard J.C."/>
            <person name="Berthier D."/>
            <person name="Botha M."/>
            <person name="Joubert F."/>
            <person name="Corton C.H."/>
            <person name="Thomson N.R."/>
            <person name="Allsopp M.T."/>
            <person name="Allsopp B.A."/>
        </authorList>
    </citation>
    <scope>NUCLEOTIDE SEQUENCE [LARGE SCALE GENOMIC DNA]</scope>
    <source>
        <strain>Welgevonden</strain>
    </source>
</reference>
<reference key="2">
    <citation type="journal article" date="2006" name="J. Bacteriol.">
        <title>Comparative genomic analysis of three strains of Ehrlichia ruminantium reveals an active process of genome size plasticity.</title>
        <authorList>
            <person name="Frutos R."/>
            <person name="Viari A."/>
            <person name="Ferraz C."/>
            <person name="Morgat A."/>
            <person name="Eychenie S."/>
            <person name="Kandassamy Y."/>
            <person name="Chantal I."/>
            <person name="Bensaid A."/>
            <person name="Coissac E."/>
            <person name="Vachiery N."/>
            <person name="Demaille J."/>
            <person name="Martinez D."/>
        </authorList>
    </citation>
    <scope>NUCLEOTIDE SEQUENCE [LARGE SCALE GENOMIC DNA]</scope>
    <source>
        <strain>Welgevonden</strain>
    </source>
</reference>
<sequence>MQGLYIKSYGCQMNVYDSLIIENIIKPLGFSIVNEPSEADIVILNTCHIREKAAEKLYSELGRIRKIQETKNLTIVVAGCVAQAEGTEIFTRAPFVDIVVGPQSIHTLPELIVKARKIKKQIINIDFPVISKFDAIAVEEYTKNQKVSAFISVQEGCNKFCSFCVVPYTRGEEYSRTVEAIFKEALILADSGIKEITLIGQNVNAYHGTYKGNEWDLGRLIQHIAKISSIERIYYTTSHPRDMHESLYEAHGIEKKLIPFIHLPVQSGSNKILRKMNRKHTAEEYINIIKTLRKHRSDIAYSSDFIVGFPGETDEDFENTIQLIEEVKFSQAYSFKYSPRPGTPSAEYTSQIPDEIKSQRLTKLQELVHKQQLEFNKKMIGETHPVLFYKKGKFDNQIIGKTPYMQSCYINTENPDLYYNKIVPIKITDAHKNHLTGIIPNTLPV</sequence>
<gene>
    <name evidence="1" type="primary">miaB</name>
    <name type="ordered locus">Erum2620</name>
    <name type="ordered locus">ERWE_CDS_02650</name>
</gene>